<sequence>MLSSLNVLQSSFRGKTALSNSTLLQKVSFAGKEYPLEPIDEKTPILFQWFEARPERYEKGEVPILNTKEHPYLSNIINAAKIENERIIGVLVDGNFTYEQKKEFLSLENEYQNIKIIYRADVDFSMYDKKLSDIYLENIHKQESYPASERDNYLLGLLREELKNIPEGKDSLIESYAEKREHTWFDFFRNLAMLKAGSLFTETGKTGCHNISPCSGCIYLDADMIITDKLGVLYAPDGIAVHVDCNDEIKSLENGAIVVNRSNHPALLAGLDIMKSKVDAHPYYDGLGKGIKRHFNYSSLHDYNAFCDFIEFKHENIIPNTSMYTCSSW</sequence>
<protein>
    <recommendedName>
        <fullName evidence="6">Protein-arginine N-acetylglucosaminyltransferase NleB1</fullName>
        <shortName evidence="6">Arginine GlcNAcyltransferase NleB1</shortName>
        <ecNumber evidence="4">2.4.1.-</ecNumber>
    </recommendedName>
    <alternativeName>
        <fullName evidence="5">Non-LEE-encoded type III effector B1</fullName>
    </alternativeName>
</protein>
<evidence type="ECO:0000250" key="1">
    <source>
        <dbReference type="UniProtKB" id="A0A482PDI9"/>
    </source>
</evidence>
<evidence type="ECO:0000250" key="2">
    <source>
        <dbReference type="UniProtKB" id="B7UI21"/>
    </source>
</evidence>
<evidence type="ECO:0000269" key="3">
    <source>
    </source>
</evidence>
<evidence type="ECO:0000269" key="4">
    <source>
    </source>
</evidence>
<evidence type="ECO:0000303" key="5">
    <source>
    </source>
</evidence>
<evidence type="ECO:0000305" key="6"/>
<evidence type="ECO:0000312" key="7">
    <source>
        <dbReference type="EMBL" id="BAB37280.1"/>
    </source>
</evidence>
<keyword id="KW-0325">Glycoprotein</keyword>
<keyword id="KW-0328">Glycosyltransferase</keyword>
<keyword id="KW-1035">Host cytoplasm</keyword>
<keyword id="KW-0464">Manganese</keyword>
<keyword id="KW-0479">Metal-binding</keyword>
<keyword id="KW-1185">Reference proteome</keyword>
<keyword id="KW-0964">Secreted</keyword>
<keyword id="KW-0800">Toxin</keyword>
<keyword id="KW-0808">Transferase</keyword>
<keyword id="KW-0843">Virulence</keyword>
<gene>
    <name evidence="5" type="primary">nleB1</name>
    <name evidence="7" type="ordered locus">ECs3857</name>
</gene>
<accession>Q8XBX8</accession>
<accession>A0A0H3JHS6</accession>
<accession>A0A6M0JF43</accession>
<accession>Q7AAV0</accession>
<proteinExistence type="evidence at protein level"/>
<feature type="chain" id="PRO_0000452592" description="Protein-arginine N-acetylglucosaminyltransferase NleB1">
    <location>
        <begin position="1"/>
        <end position="329"/>
    </location>
</feature>
<feature type="short sequence motif" description="DXD motif" evidence="6">
    <location>
        <begin position="221"/>
        <end position="223"/>
    </location>
</feature>
<feature type="active site" description="Proton acceptor" evidence="2">
    <location>
        <position position="253"/>
    </location>
</feature>
<feature type="binding site" evidence="2">
    <location>
        <begin position="48"/>
        <end position="50"/>
    </location>
    <ligand>
        <name>UDP-N-acetyl-alpha-D-glucosamine</name>
        <dbReference type="ChEBI" id="CHEBI:57705"/>
    </ligand>
</feature>
<feature type="binding site" evidence="2">
    <location>
        <position position="72"/>
    </location>
    <ligand>
        <name>UDP-N-acetyl-alpha-D-glucosamine</name>
        <dbReference type="ChEBI" id="CHEBI:57705"/>
    </ligand>
</feature>
<feature type="binding site" evidence="2">
    <location>
        <begin position="219"/>
        <end position="222"/>
    </location>
    <ligand>
        <name>UDP-N-acetyl-alpha-D-glucosamine</name>
        <dbReference type="ChEBI" id="CHEBI:57705"/>
    </ligand>
</feature>
<feature type="binding site" evidence="2">
    <location>
        <position position="223"/>
    </location>
    <ligand>
        <name>Mn(2+)</name>
        <dbReference type="ChEBI" id="CHEBI:29035"/>
    </ligand>
</feature>
<feature type="binding site" evidence="2">
    <location>
        <position position="320"/>
    </location>
    <ligand>
        <name>Mn(2+)</name>
        <dbReference type="ChEBI" id="CHEBI:29035"/>
    </ligand>
</feature>
<feature type="binding site" evidence="2">
    <location>
        <position position="322"/>
    </location>
    <ligand>
        <name>Mn(2+)</name>
        <dbReference type="ChEBI" id="CHEBI:29035"/>
    </ligand>
</feature>
<feature type="binding site" evidence="2">
    <location>
        <position position="322"/>
    </location>
    <ligand>
        <name>UDP-N-acetyl-alpha-D-glucosamine</name>
        <dbReference type="ChEBI" id="CHEBI:57705"/>
    </ligand>
</feature>
<feature type="binding site" evidence="2">
    <location>
        <begin position="327"/>
        <end position="329"/>
    </location>
    <ligand>
        <name>UDP-N-acetyl-alpha-D-glucosamine</name>
        <dbReference type="ChEBI" id="CHEBI:57705"/>
    </ligand>
</feature>
<feature type="glycosylation site" description="N-beta-linked (GlcNAc) arginine; by autocatalysis" evidence="2">
    <location>
        <position position="13"/>
    </location>
</feature>
<feature type="glycosylation site" description="N-beta-linked (GlcNAc) arginine; by autocatalysis" evidence="2">
    <location>
        <position position="53"/>
    </location>
</feature>
<feature type="glycosylation site" description="N-beta-linked (GlcNAc) arginine; by autocatalysis" evidence="2">
    <location>
        <position position="159"/>
    </location>
</feature>
<feature type="glycosylation site" description="N-beta-linked (GlcNAc) arginine; by autocatalysis" evidence="2">
    <location>
        <position position="293"/>
    </location>
</feature>
<feature type="mutagenesis site" description="Abolished protein-arginine N-acetylglucosaminyltransferase activity." evidence="4">
    <original>DAD</original>
    <variation>AAA</variation>
    <location>
        <begin position="221"/>
        <end position="223"/>
    </location>
</feature>
<name>NLEB1_ECO57</name>
<reference key="1">
    <citation type="journal article" date="2001" name="DNA Res.">
        <title>Complete genome sequence of enterohemorrhagic Escherichia coli O157:H7 and genomic comparison with a laboratory strain K-12.</title>
        <authorList>
            <person name="Hayashi T."/>
            <person name="Makino K."/>
            <person name="Ohnishi M."/>
            <person name="Kurokawa K."/>
            <person name="Ishii K."/>
            <person name="Yokoyama K."/>
            <person name="Han C.-G."/>
            <person name="Ohtsubo E."/>
            <person name="Nakayama K."/>
            <person name="Murata T."/>
            <person name="Tanaka M."/>
            <person name="Tobe T."/>
            <person name="Iida T."/>
            <person name="Takami H."/>
            <person name="Honda T."/>
            <person name="Sasakawa C."/>
            <person name="Ogasawara N."/>
            <person name="Yasunaga T."/>
            <person name="Kuhara S."/>
            <person name="Shiba T."/>
            <person name="Hattori M."/>
            <person name="Shinagawa H."/>
        </authorList>
    </citation>
    <scope>NUCLEOTIDE SEQUENCE [LARGE SCALE GENOMIC DNA]</scope>
    <source>
        <strain>O157:H7 / Sakai / RIMD 0509952 / EHEC</strain>
    </source>
</reference>
<reference key="2">
    <citation type="journal article" date="2017" name="J. Biol. Chem.">
        <title>NleB/SseK effectors from Citrobacter rodentium, Escherichia coli, and Salmonella enterica display distinct differences in host substrate specificity.</title>
        <authorList>
            <person name="El Qaidi S."/>
            <person name="Chen K."/>
            <person name="Halim A."/>
            <person name="Siukstaite L."/>
            <person name="Rueter C."/>
            <person name="Hurtado-Guerrero R."/>
            <person name="Clausen H."/>
            <person name="Hardwidge P.R."/>
        </authorList>
    </citation>
    <scope>FUNCTION</scope>
    <source>
        <strain>O157:H7 / Sakai / RIMD 0509952 / EHEC</strain>
    </source>
</reference>
<reference key="3">
    <citation type="journal article" date="2018" name="Front. Cell. Infect. Microbiol.">
        <title>High-throughput screening for bacterial glycosyltransferase inhibitors.</title>
        <authorList>
            <person name="El Qaidi S."/>
            <person name="Zhu C."/>
            <person name="McDonald P."/>
            <person name="Roy A."/>
            <person name="Maity P.K."/>
            <person name="Rane D."/>
            <person name="Perera C."/>
            <person name="Hardwidge P.R."/>
        </authorList>
    </citation>
    <scope>CATALYTIC ACTIVITY</scope>
    <scope>COFACTOR</scope>
    <scope>BIOPHYSICOCHEMICAL PROPERTIES</scope>
    <scope>ACTIVITY REGULATION</scope>
    <scope>MUTAGENESIS OF 221-ASP--ASP-223</scope>
    <source>
        <strain>O157:H7 / Sakai / RIMD 0509952 / EHEC</strain>
    </source>
</reference>
<organism>
    <name type="scientific">Escherichia coli O157:H7</name>
    <dbReference type="NCBI Taxonomy" id="83334"/>
    <lineage>
        <taxon>Bacteria</taxon>
        <taxon>Pseudomonadati</taxon>
        <taxon>Pseudomonadota</taxon>
        <taxon>Gammaproteobacteria</taxon>
        <taxon>Enterobacterales</taxon>
        <taxon>Enterobacteriaceae</taxon>
        <taxon>Escherichia</taxon>
    </lineage>
</organism>
<comment type="function">
    <text evidence="2 3">Protein-arginine N-acetylglucosaminyltransferase effector that disrupts TNF signaling in infected cells, including NF-kappa-B signaling, apoptosis and necroptosis (PubMed:28522607). Acts by catalyzing the transfer of a single N-acetylglucosamine (GlcNAc) to a conserved arginine residue in the death domain of host proteins such as FADD: arginine GlcNAcylation prevents homotypic/heterotypic death domain interactions and assembly of the oligomeric TNF-alpha receptor complex, thereby disrupting TNF signaling (PubMed:28522607). Also acts on host proteins without a death domain: catalyzes arginine GlcNAcylation of host GAPDH protein, thereby preventing GAPDH interaction with TRAF2, leading to inhibit NF-kappa-B signaling (PubMed:28522607). Catalyzes auto-GlcNAcylation, which is required for activity toward death domain-containing host target proteins (By similarity).</text>
</comment>
<comment type="catalytic activity">
    <reaction evidence="4">
        <text>L-arginyl-[protein] + UDP-N-acetyl-alpha-D-glucosamine = N(omega)-(N-acetyl-beta-D-glucosaminyl)-L-arginyl-[protein] + UDP + H(+)</text>
        <dbReference type="Rhea" id="RHEA:66632"/>
        <dbReference type="Rhea" id="RHEA-COMP:10532"/>
        <dbReference type="Rhea" id="RHEA-COMP:17079"/>
        <dbReference type="ChEBI" id="CHEBI:15378"/>
        <dbReference type="ChEBI" id="CHEBI:29965"/>
        <dbReference type="ChEBI" id="CHEBI:57705"/>
        <dbReference type="ChEBI" id="CHEBI:58223"/>
        <dbReference type="ChEBI" id="CHEBI:167322"/>
    </reaction>
    <physiologicalReaction direction="left-to-right" evidence="4">
        <dbReference type="Rhea" id="RHEA:66633"/>
    </physiologicalReaction>
</comment>
<comment type="cofactor">
    <cofactor evidence="4">
        <name>Mn(2+)</name>
        <dbReference type="ChEBI" id="CHEBI:29035"/>
    </cofactor>
</comment>
<comment type="activity regulation">
    <text evidence="4">Protein-arginine N-acetylglucosaminyltransferase activity is inhibited by 100066N compound (flavone analog) and 102644N compound (a substituted isoxazole).</text>
</comment>
<comment type="biophysicochemical properties">
    <kinetics>
        <KM evidence="4">379 uM for UDP-N-acetyl-alpha-D-glucosamine</KM>
        <text evidence="4">kcat is 50 sec(-1) with UDP-N-acetyl-alpha-D-glucosamine substrate.</text>
    </kinetics>
</comment>
<comment type="interaction">
    <interactant intactId="EBI-10039153">
        <id>Q8XBX8</id>
    </interactant>
    <interactant intactId="EBI-2211064">
        <id>Q14244</id>
        <label>MAP7</label>
    </interactant>
    <organismsDiffer>true</organismsDiffer>
    <experiments>4</experiments>
</comment>
<comment type="subcellular location">
    <subcellularLocation>
        <location evidence="1">Secreted</location>
    </subcellularLocation>
    <subcellularLocation>
        <location evidence="2">Host cytoplasm</location>
    </subcellularLocation>
    <text evidence="1">Secreted via the type III secretion system (T3SS).</text>
</comment>
<comment type="domain">
    <text evidence="2">Adopts a GT-A fold and acts as an inverting enzyme that converts the alpha-configuration in the UDP-N-acetyl-alpha-D-glucosamine donor to the beta configuration in the N-linked (GlcNAc) arginine product.</text>
</comment>
<comment type="PTM">
    <text evidence="2">Auto-glycosylated: arginine GlcNAcylation is required for activity toward death domain-containing host target proteins.</text>
</comment>
<comment type="similarity">
    <text evidence="6">Belongs to the glycosyltransferase NleB family.</text>
</comment>
<dbReference type="EC" id="2.4.1.-" evidence="4"/>
<dbReference type="EMBL" id="BA000007">
    <property type="protein sequence ID" value="BAB37280.1"/>
    <property type="molecule type" value="Genomic_DNA"/>
</dbReference>
<dbReference type="RefSeq" id="NP_311884.1">
    <property type="nucleotide sequence ID" value="NC_002695.1"/>
</dbReference>
<dbReference type="SMR" id="Q8XBX8"/>
<dbReference type="IntAct" id="Q8XBX8">
    <property type="interactions" value="4"/>
</dbReference>
<dbReference type="STRING" id="155864.Z4328"/>
<dbReference type="GlyCosmos" id="Q8XBX8">
    <property type="glycosylation" value="4 sites, No reported glycans"/>
</dbReference>
<dbReference type="GeneID" id="916317"/>
<dbReference type="KEGG" id="ecs:ECs_3857"/>
<dbReference type="PATRIC" id="fig|386585.9.peg.4025"/>
<dbReference type="eggNOG" id="ENOG502Z8RE">
    <property type="taxonomic scope" value="Bacteria"/>
</dbReference>
<dbReference type="HOGENOM" id="CLU_081850_0_0_6"/>
<dbReference type="OMA" id="PIRTICH"/>
<dbReference type="Proteomes" id="UP000000558">
    <property type="component" value="Chromosome"/>
</dbReference>
<dbReference type="GO" id="GO:0005576">
    <property type="term" value="C:extracellular region"/>
    <property type="evidence" value="ECO:0007669"/>
    <property type="project" value="UniProtKB-SubCell"/>
</dbReference>
<dbReference type="GO" id="GO:0030430">
    <property type="term" value="C:host cell cytoplasm"/>
    <property type="evidence" value="ECO:0007669"/>
    <property type="project" value="UniProtKB-SubCell"/>
</dbReference>
<dbReference type="GO" id="GO:0030145">
    <property type="term" value="F:manganese ion binding"/>
    <property type="evidence" value="ECO:0000314"/>
    <property type="project" value="UniProtKB"/>
</dbReference>
<dbReference type="GO" id="GO:0106362">
    <property type="term" value="F:protein-arginine N-acetylglucosaminyltransferase activity"/>
    <property type="evidence" value="ECO:0000314"/>
    <property type="project" value="UniProtKB"/>
</dbReference>
<dbReference type="GO" id="GO:0090729">
    <property type="term" value="F:toxin activity"/>
    <property type="evidence" value="ECO:0007669"/>
    <property type="project" value="UniProtKB-KW"/>
</dbReference>
<dbReference type="GO" id="GO:0052038">
    <property type="term" value="P:symbiont-mediated perturbation of host intracellular transport"/>
    <property type="evidence" value="ECO:0000315"/>
    <property type="project" value="AgBase"/>
</dbReference>
<dbReference type="NCBIfam" id="NF011909">
    <property type="entry name" value="PRK15382.1"/>
    <property type="match status" value="1"/>
</dbReference>
<dbReference type="Pfam" id="PF24688">
    <property type="entry name" value="SseK_NleB"/>
    <property type="match status" value="1"/>
</dbReference>